<dbReference type="EMBL" id="CP000029">
    <property type="protein sequence ID" value="AAW55041.1"/>
    <property type="molecule type" value="Genomic_DNA"/>
</dbReference>
<dbReference type="RefSeq" id="WP_001829959.1">
    <property type="nucleotide sequence ID" value="NC_002976.3"/>
</dbReference>
<dbReference type="SMR" id="Q5HMA2"/>
<dbReference type="STRING" id="176279.SERP1727"/>
<dbReference type="KEGG" id="ser:SERP1727"/>
<dbReference type="eggNOG" id="COG0254">
    <property type="taxonomic scope" value="Bacteria"/>
</dbReference>
<dbReference type="HOGENOM" id="CLU_114306_2_2_9"/>
<dbReference type="Proteomes" id="UP000000531">
    <property type="component" value="Chromosome"/>
</dbReference>
<dbReference type="GO" id="GO:1990904">
    <property type="term" value="C:ribonucleoprotein complex"/>
    <property type="evidence" value="ECO:0007669"/>
    <property type="project" value="UniProtKB-KW"/>
</dbReference>
<dbReference type="GO" id="GO:0005840">
    <property type="term" value="C:ribosome"/>
    <property type="evidence" value="ECO:0007669"/>
    <property type="project" value="UniProtKB-KW"/>
</dbReference>
<dbReference type="GO" id="GO:0003735">
    <property type="term" value="F:structural constituent of ribosome"/>
    <property type="evidence" value="ECO:0007669"/>
    <property type="project" value="InterPro"/>
</dbReference>
<dbReference type="GO" id="GO:0006412">
    <property type="term" value="P:translation"/>
    <property type="evidence" value="ECO:0007669"/>
    <property type="project" value="UniProtKB-UniRule"/>
</dbReference>
<dbReference type="Gene3D" id="4.10.830.30">
    <property type="entry name" value="Ribosomal protein L31"/>
    <property type="match status" value="1"/>
</dbReference>
<dbReference type="HAMAP" id="MF_00502">
    <property type="entry name" value="Ribosomal_bL31_2"/>
    <property type="match status" value="1"/>
</dbReference>
<dbReference type="InterPro" id="IPR034704">
    <property type="entry name" value="Ribosomal_bL28/bL31-like_sf"/>
</dbReference>
<dbReference type="InterPro" id="IPR002150">
    <property type="entry name" value="Ribosomal_bL31"/>
</dbReference>
<dbReference type="InterPro" id="IPR027493">
    <property type="entry name" value="Ribosomal_bL31_B"/>
</dbReference>
<dbReference type="InterPro" id="IPR042105">
    <property type="entry name" value="Ribosomal_bL31_sf"/>
</dbReference>
<dbReference type="NCBIfam" id="TIGR00105">
    <property type="entry name" value="L31"/>
    <property type="match status" value="1"/>
</dbReference>
<dbReference type="NCBIfam" id="NF002462">
    <property type="entry name" value="PRK01678.1"/>
    <property type="match status" value="1"/>
</dbReference>
<dbReference type="PANTHER" id="PTHR33280">
    <property type="entry name" value="50S RIBOSOMAL PROTEIN L31, CHLOROPLASTIC"/>
    <property type="match status" value="1"/>
</dbReference>
<dbReference type="PANTHER" id="PTHR33280:SF1">
    <property type="entry name" value="LARGE RIBOSOMAL SUBUNIT PROTEIN BL31C"/>
    <property type="match status" value="1"/>
</dbReference>
<dbReference type="Pfam" id="PF01197">
    <property type="entry name" value="Ribosomal_L31"/>
    <property type="match status" value="1"/>
</dbReference>
<dbReference type="PRINTS" id="PR01249">
    <property type="entry name" value="RIBOSOMALL31"/>
</dbReference>
<dbReference type="SUPFAM" id="SSF143800">
    <property type="entry name" value="L28p-like"/>
    <property type="match status" value="1"/>
</dbReference>
<dbReference type="PROSITE" id="PS01143">
    <property type="entry name" value="RIBOSOMAL_L31"/>
    <property type="match status" value="1"/>
</dbReference>
<keyword id="KW-1185">Reference proteome</keyword>
<keyword id="KW-0687">Ribonucleoprotein</keyword>
<keyword id="KW-0689">Ribosomal protein</keyword>
<proteinExistence type="inferred from homology"/>
<evidence type="ECO:0000255" key="1">
    <source>
        <dbReference type="HAMAP-Rule" id="MF_00502"/>
    </source>
</evidence>
<evidence type="ECO:0000305" key="2"/>
<sequence length="85" mass="9779">MKQGIHPEYHKVIFLDTTTNFKFLSGSTKTSSETMEWEDGNEYPVIRLDVSSDSHPFYTGRQKFAAADGRVERFNKKFGLKSNNN</sequence>
<gene>
    <name evidence="1" type="primary">rpmE2</name>
    <name type="synonym">rpmE</name>
    <name type="ordered locus">SERP1727</name>
</gene>
<reference key="1">
    <citation type="journal article" date="2005" name="J. Bacteriol.">
        <title>Insights on evolution of virulence and resistance from the complete genome analysis of an early methicillin-resistant Staphylococcus aureus strain and a biofilm-producing methicillin-resistant Staphylococcus epidermidis strain.</title>
        <authorList>
            <person name="Gill S.R."/>
            <person name="Fouts D.E."/>
            <person name="Archer G.L."/>
            <person name="Mongodin E.F."/>
            <person name="DeBoy R.T."/>
            <person name="Ravel J."/>
            <person name="Paulsen I.T."/>
            <person name="Kolonay J.F."/>
            <person name="Brinkac L.M."/>
            <person name="Beanan M.J."/>
            <person name="Dodson R.J."/>
            <person name="Daugherty S.C."/>
            <person name="Madupu R."/>
            <person name="Angiuoli S.V."/>
            <person name="Durkin A.S."/>
            <person name="Haft D.H."/>
            <person name="Vamathevan J.J."/>
            <person name="Khouri H."/>
            <person name="Utterback T.R."/>
            <person name="Lee C."/>
            <person name="Dimitrov G."/>
            <person name="Jiang L."/>
            <person name="Qin H."/>
            <person name="Weidman J."/>
            <person name="Tran K."/>
            <person name="Kang K.H."/>
            <person name="Hance I.R."/>
            <person name="Nelson K.E."/>
            <person name="Fraser C.M."/>
        </authorList>
    </citation>
    <scope>NUCLEOTIDE SEQUENCE [LARGE SCALE GENOMIC DNA]</scope>
    <source>
        <strain>ATCC 35984 / DSM 28319 / BCRC 17069 / CCUG 31568 / BM 3577 / RP62A</strain>
    </source>
</reference>
<comment type="subunit">
    <text evidence="1">Part of the 50S ribosomal subunit.</text>
</comment>
<comment type="similarity">
    <text evidence="1">Belongs to the bacterial ribosomal protein bL31 family. Type B subfamily.</text>
</comment>
<feature type="chain" id="PRO_0000173262" description="Large ribosomal subunit protein bL31B">
    <location>
        <begin position="1"/>
        <end position="85"/>
    </location>
</feature>
<accession>Q5HMA2</accession>
<organism>
    <name type="scientific">Staphylococcus epidermidis (strain ATCC 35984 / DSM 28319 / BCRC 17069 / CCUG 31568 / BM 3577 / RP62A)</name>
    <dbReference type="NCBI Taxonomy" id="176279"/>
    <lineage>
        <taxon>Bacteria</taxon>
        <taxon>Bacillati</taxon>
        <taxon>Bacillota</taxon>
        <taxon>Bacilli</taxon>
        <taxon>Bacillales</taxon>
        <taxon>Staphylococcaceae</taxon>
        <taxon>Staphylococcus</taxon>
    </lineage>
</organism>
<protein>
    <recommendedName>
        <fullName evidence="1">Large ribosomal subunit protein bL31B</fullName>
    </recommendedName>
    <alternativeName>
        <fullName evidence="2">50S ribosomal protein L31 type B</fullName>
    </alternativeName>
</protein>
<name>RL31B_STAEQ</name>